<accession>B1YT59</accession>
<comment type="function">
    <text evidence="1">Could be a mediator in iron transactions between iron acquisition and iron-requiring processes, such as synthesis and/or repair of Fe-S clusters in biosynthetic enzymes.</text>
</comment>
<comment type="similarity">
    <text evidence="1">Belongs to the Fe(2+)-trafficking protein family.</text>
</comment>
<feature type="chain" id="PRO_1000131828" description="Probable Fe(2+)-trafficking protein">
    <location>
        <begin position="1"/>
        <end position="91"/>
    </location>
</feature>
<evidence type="ECO:0000255" key="1">
    <source>
        <dbReference type="HAMAP-Rule" id="MF_00686"/>
    </source>
</evidence>
<dbReference type="EMBL" id="CP001025">
    <property type="protein sequence ID" value="ACB64548.1"/>
    <property type="molecule type" value="Genomic_DNA"/>
</dbReference>
<dbReference type="RefSeq" id="WP_006758398.1">
    <property type="nucleotide sequence ID" value="NC_010551.1"/>
</dbReference>
<dbReference type="SMR" id="B1YT59"/>
<dbReference type="KEGG" id="bac:BamMC406_2067"/>
<dbReference type="HOGENOM" id="CLU_170994_0_0_4"/>
<dbReference type="OrthoDB" id="9804318at2"/>
<dbReference type="Proteomes" id="UP000001680">
    <property type="component" value="Chromosome 1"/>
</dbReference>
<dbReference type="GO" id="GO:0005829">
    <property type="term" value="C:cytosol"/>
    <property type="evidence" value="ECO:0007669"/>
    <property type="project" value="TreeGrafter"/>
</dbReference>
<dbReference type="GO" id="GO:0005506">
    <property type="term" value="F:iron ion binding"/>
    <property type="evidence" value="ECO:0007669"/>
    <property type="project" value="UniProtKB-UniRule"/>
</dbReference>
<dbReference type="GO" id="GO:0034599">
    <property type="term" value="P:cellular response to oxidative stress"/>
    <property type="evidence" value="ECO:0007669"/>
    <property type="project" value="TreeGrafter"/>
</dbReference>
<dbReference type="FunFam" id="1.10.3880.10:FF:000001">
    <property type="entry name" value="Probable Fe(2+)-trafficking protein"/>
    <property type="match status" value="1"/>
</dbReference>
<dbReference type="Gene3D" id="1.10.3880.10">
    <property type="entry name" value="Fe(II) trafficking protein YggX"/>
    <property type="match status" value="1"/>
</dbReference>
<dbReference type="HAMAP" id="MF_00686">
    <property type="entry name" value="Fe_traffic_YggX"/>
    <property type="match status" value="1"/>
</dbReference>
<dbReference type="InterPro" id="IPR007457">
    <property type="entry name" value="Fe_traffick_prot_YggX"/>
</dbReference>
<dbReference type="InterPro" id="IPR036766">
    <property type="entry name" value="Fe_traffick_prot_YggX_sf"/>
</dbReference>
<dbReference type="NCBIfam" id="NF003817">
    <property type="entry name" value="PRK05408.1"/>
    <property type="match status" value="1"/>
</dbReference>
<dbReference type="PANTHER" id="PTHR36965">
    <property type="entry name" value="FE(2+)-TRAFFICKING PROTEIN-RELATED"/>
    <property type="match status" value="1"/>
</dbReference>
<dbReference type="PANTHER" id="PTHR36965:SF1">
    <property type="entry name" value="FE(2+)-TRAFFICKING PROTEIN-RELATED"/>
    <property type="match status" value="1"/>
</dbReference>
<dbReference type="Pfam" id="PF04362">
    <property type="entry name" value="Iron_traffic"/>
    <property type="match status" value="1"/>
</dbReference>
<dbReference type="PIRSF" id="PIRSF029827">
    <property type="entry name" value="Fe_traffic_YggX"/>
    <property type="match status" value="1"/>
</dbReference>
<dbReference type="SUPFAM" id="SSF111148">
    <property type="entry name" value="YggX-like"/>
    <property type="match status" value="1"/>
</dbReference>
<sequence length="91" mass="10311">MARMIQCAKLGKEAEGLDFPPLPGELGKRIYESVSKEAWQGWLKQQTMLINENRLNMADPRARQYLMKQTEKYFFGDGADQASGFVPPTEG</sequence>
<proteinExistence type="inferred from homology"/>
<keyword id="KW-0408">Iron</keyword>
<protein>
    <recommendedName>
        <fullName evidence="1">Probable Fe(2+)-trafficking protein</fullName>
    </recommendedName>
</protein>
<reference key="1">
    <citation type="submission" date="2008-04" db="EMBL/GenBank/DDBJ databases">
        <title>Complete sequence of chromosome 1 of Burkholderia ambifaria MC40-6.</title>
        <authorList>
            <person name="Copeland A."/>
            <person name="Lucas S."/>
            <person name="Lapidus A."/>
            <person name="Glavina del Rio T."/>
            <person name="Dalin E."/>
            <person name="Tice H."/>
            <person name="Pitluck S."/>
            <person name="Chain P."/>
            <person name="Malfatti S."/>
            <person name="Shin M."/>
            <person name="Vergez L."/>
            <person name="Lang D."/>
            <person name="Schmutz J."/>
            <person name="Larimer F."/>
            <person name="Land M."/>
            <person name="Hauser L."/>
            <person name="Kyrpides N."/>
            <person name="Lykidis A."/>
            <person name="Ramette A."/>
            <person name="Konstantinidis K."/>
            <person name="Tiedje J."/>
            <person name="Richardson P."/>
        </authorList>
    </citation>
    <scope>NUCLEOTIDE SEQUENCE [LARGE SCALE GENOMIC DNA]</scope>
    <source>
        <strain>MC40-6</strain>
    </source>
</reference>
<organism>
    <name type="scientific">Burkholderia ambifaria (strain MC40-6)</name>
    <dbReference type="NCBI Taxonomy" id="398577"/>
    <lineage>
        <taxon>Bacteria</taxon>
        <taxon>Pseudomonadati</taxon>
        <taxon>Pseudomonadota</taxon>
        <taxon>Betaproteobacteria</taxon>
        <taxon>Burkholderiales</taxon>
        <taxon>Burkholderiaceae</taxon>
        <taxon>Burkholderia</taxon>
        <taxon>Burkholderia cepacia complex</taxon>
    </lineage>
</organism>
<gene>
    <name type="ordered locus">BamMC406_2067</name>
</gene>
<name>FETP_BURA4</name>